<name>KAD_SYNS3</name>
<protein>
    <recommendedName>
        <fullName evidence="1">Adenylate kinase</fullName>
        <shortName evidence="1">AK</shortName>
        <ecNumber evidence="1">2.7.4.3</ecNumber>
    </recommendedName>
    <alternativeName>
        <fullName evidence="1">ATP-AMP transphosphorylase</fullName>
    </alternativeName>
    <alternativeName>
        <fullName evidence="1">ATP:AMP phosphotransferase</fullName>
    </alternativeName>
    <alternativeName>
        <fullName evidence="1">Adenylate monophosphate kinase</fullName>
    </alternativeName>
</protein>
<evidence type="ECO:0000255" key="1">
    <source>
        <dbReference type="HAMAP-Rule" id="MF_00235"/>
    </source>
</evidence>
<comment type="function">
    <text evidence="1">Catalyzes the reversible transfer of the terminal phosphate group between ATP and AMP. Plays an important role in cellular energy homeostasis and in adenine nucleotide metabolism.</text>
</comment>
<comment type="catalytic activity">
    <reaction evidence="1">
        <text>AMP + ATP = 2 ADP</text>
        <dbReference type="Rhea" id="RHEA:12973"/>
        <dbReference type="ChEBI" id="CHEBI:30616"/>
        <dbReference type="ChEBI" id="CHEBI:456215"/>
        <dbReference type="ChEBI" id="CHEBI:456216"/>
        <dbReference type="EC" id="2.7.4.3"/>
    </reaction>
</comment>
<comment type="pathway">
    <text evidence="1">Purine metabolism; AMP biosynthesis via salvage pathway; AMP from ADP: step 1/1.</text>
</comment>
<comment type="subunit">
    <text evidence="1">Monomer.</text>
</comment>
<comment type="subcellular location">
    <subcellularLocation>
        <location evidence="1">Cytoplasm</location>
    </subcellularLocation>
</comment>
<comment type="domain">
    <text evidence="1">Consists of three domains, a large central CORE domain and two small peripheral domains, NMPbind and LID, which undergo movements during catalysis. The LID domain closes over the site of phosphoryl transfer upon ATP binding. Assembling and dissambling the active center during each catalytic cycle provides an effective means to prevent ATP hydrolysis.</text>
</comment>
<comment type="similarity">
    <text evidence="1">Belongs to the adenylate kinase family.</text>
</comment>
<dbReference type="EC" id="2.7.4.3" evidence="1"/>
<dbReference type="EMBL" id="CP000435">
    <property type="protein sequence ID" value="ABI47824.1"/>
    <property type="molecule type" value="Genomic_DNA"/>
</dbReference>
<dbReference type="RefSeq" id="WP_011618383.1">
    <property type="nucleotide sequence ID" value="NC_008319.1"/>
</dbReference>
<dbReference type="SMR" id="Q0ID24"/>
<dbReference type="STRING" id="64471.sync_0418"/>
<dbReference type="KEGG" id="syg:sync_0418"/>
<dbReference type="eggNOG" id="COG0563">
    <property type="taxonomic scope" value="Bacteria"/>
</dbReference>
<dbReference type="HOGENOM" id="CLU_032354_4_1_3"/>
<dbReference type="OrthoDB" id="9805030at2"/>
<dbReference type="UniPathway" id="UPA00588">
    <property type="reaction ID" value="UER00649"/>
</dbReference>
<dbReference type="Proteomes" id="UP000001961">
    <property type="component" value="Chromosome"/>
</dbReference>
<dbReference type="GO" id="GO:0005737">
    <property type="term" value="C:cytoplasm"/>
    <property type="evidence" value="ECO:0007669"/>
    <property type="project" value="UniProtKB-SubCell"/>
</dbReference>
<dbReference type="GO" id="GO:0004017">
    <property type="term" value="F:adenylate kinase activity"/>
    <property type="evidence" value="ECO:0007669"/>
    <property type="project" value="UniProtKB-UniRule"/>
</dbReference>
<dbReference type="GO" id="GO:0005524">
    <property type="term" value="F:ATP binding"/>
    <property type="evidence" value="ECO:0007669"/>
    <property type="project" value="UniProtKB-UniRule"/>
</dbReference>
<dbReference type="GO" id="GO:0044209">
    <property type="term" value="P:AMP salvage"/>
    <property type="evidence" value="ECO:0007669"/>
    <property type="project" value="UniProtKB-UniRule"/>
</dbReference>
<dbReference type="CDD" id="cd01428">
    <property type="entry name" value="ADK"/>
    <property type="match status" value="1"/>
</dbReference>
<dbReference type="Gene3D" id="3.40.50.300">
    <property type="entry name" value="P-loop containing nucleotide triphosphate hydrolases"/>
    <property type="match status" value="1"/>
</dbReference>
<dbReference type="HAMAP" id="MF_00235">
    <property type="entry name" value="Adenylate_kinase_Adk"/>
    <property type="match status" value="1"/>
</dbReference>
<dbReference type="InterPro" id="IPR000850">
    <property type="entry name" value="Adenylat/UMP-CMP_kin"/>
</dbReference>
<dbReference type="InterPro" id="IPR033690">
    <property type="entry name" value="Adenylat_kinase_CS"/>
</dbReference>
<dbReference type="InterPro" id="IPR027417">
    <property type="entry name" value="P-loop_NTPase"/>
</dbReference>
<dbReference type="NCBIfam" id="NF001381">
    <property type="entry name" value="PRK00279.1-3"/>
    <property type="match status" value="1"/>
</dbReference>
<dbReference type="NCBIfam" id="NF011100">
    <property type="entry name" value="PRK14527.1"/>
    <property type="match status" value="1"/>
</dbReference>
<dbReference type="NCBIfam" id="NF011104">
    <property type="entry name" value="PRK14531.1"/>
    <property type="match status" value="1"/>
</dbReference>
<dbReference type="NCBIfam" id="NF011105">
    <property type="entry name" value="PRK14532.1"/>
    <property type="match status" value="1"/>
</dbReference>
<dbReference type="PANTHER" id="PTHR23359">
    <property type="entry name" value="NUCLEOTIDE KINASE"/>
    <property type="match status" value="1"/>
</dbReference>
<dbReference type="Pfam" id="PF00406">
    <property type="entry name" value="ADK"/>
    <property type="match status" value="1"/>
</dbReference>
<dbReference type="PRINTS" id="PR00094">
    <property type="entry name" value="ADENYLTKNASE"/>
</dbReference>
<dbReference type="SUPFAM" id="SSF52540">
    <property type="entry name" value="P-loop containing nucleoside triphosphate hydrolases"/>
    <property type="match status" value="1"/>
</dbReference>
<dbReference type="PROSITE" id="PS00113">
    <property type="entry name" value="ADENYLATE_KINASE"/>
    <property type="match status" value="1"/>
</dbReference>
<keyword id="KW-0067">ATP-binding</keyword>
<keyword id="KW-0963">Cytoplasm</keyword>
<keyword id="KW-0418">Kinase</keyword>
<keyword id="KW-0545">Nucleotide biosynthesis</keyword>
<keyword id="KW-0547">Nucleotide-binding</keyword>
<keyword id="KW-1185">Reference proteome</keyword>
<keyword id="KW-0808">Transferase</keyword>
<organism>
    <name type="scientific">Synechococcus sp. (strain CC9311)</name>
    <dbReference type="NCBI Taxonomy" id="64471"/>
    <lineage>
        <taxon>Bacteria</taxon>
        <taxon>Bacillati</taxon>
        <taxon>Cyanobacteriota</taxon>
        <taxon>Cyanophyceae</taxon>
        <taxon>Synechococcales</taxon>
        <taxon>Synechococcaceae</taxon>
        <taxon>Synechococcus</taxon>
    </lineage>
</organism>
<accession>Q0ID24</accession>
<reference key="1">
    <citation type="journal article" date="2006" name="Proc. Natl. Acad. Sci. U.S.A.">
        <title>Genome sequence of Synechococcus CC9311: insights into adaptation to a coastal environment.</title>
        <authorList>
            <person name="Palenik B."/>
            <person name="Ren Q."/>
            <person name="Dupont C.L."/>
            <person name="Myers G.S."/>
            <person name="Heidelberg J.F."/>
            <person name="Badger J.H."/>
            <person name="Madupu R."/>
            <person name="Nelson W.C."/>
            <person name="Brinkac L.M."/>
            <person name="Dodson R.J."/>
            <person name="Durkin A.S."/>
            <person name="Daugherty S.C."/>
            <person name="Sullivan S.A."/>
            <person name="Khouri H."/>
            <person name="Mohamoud Y."/>
            <person name="Halpin R."/>
            <person name="Paulsen I.T."/>
        </authorList>
    </citation>
    <scope>NUCLEOTIDE SEQUENCE [LARGE SCALE GENOMIC DNA]</scope>
    <source>
        <strain>CC9311</strain>
    </source>
</reference>
<sequence length="183" mass="19813">MKQRLLFLGPPGAGKGTQAALLCDRHGLRHLSTGDLLRAEVSAGSALGQEAESVMNRGELVSDSLVLAIVKAQLGALNGQGWLLDGFPRNVAQAEALDPLLQELNQPIEAVVLLELDDAVLIERLLSRGRDDDNEAVIRNRLVVYADKTEPLIEHYRQRGLLQSVEAHGSIEAITERIEGVLA</sequence>
<gene>
    <name evidence="1" type="primary">adk</name>
    <name type="ordered locus">sync_0418</name>
</gene>
<feature type="chain" id="PRO_1000058926" description="Adenylate kinase">
    <location>
        <begin position="1"/>
        <end position="183"/>
    </location>
</feature>
<feature type="region of interest" description="NMP" evidence="1">
    <location>
        <begin position="32"/>
        <end position="61"/>
    </location>
</feature>
<feature type="region of interest" description="LID" evidence="1">
    <location>
        <begin position="127"/>
        <end position="133"/>
    </location>
</feature>
<feature type="binding site" evidence="1">
    <location>
        <begin position="12"/>
        <end position="17"/>
    </location>
    <ligand>
        <name>ATP</name>
        <dbReference type="ChEBI" id="CHEBI:30616"/>
    </ligand>
</feature>
<feature type="binding site" evidence="1">
    <location>
        <position position="33"/>
    </location>
    <ligand>
        <name>AMP</name>
        <dbReference type="ChEBI" id="CHEBI:456215"/>
    </ligand>
</feature>
<feature type="binding site" evidence="1">
    <location>
        <position position="38"/>
    </location>
    <ligand>
        <name>AMP</name>
        <dbReference type="ChEBI" id="CHEBI:456215"/>
    </ligand>
</feature>
<feature type="binding site" evidence="1">
    <location>
        <begin position="59"/>
        <end position="61"/>
    </location>
    <ligand>
        <name>AMP</name>
        <dbReference type="ChEBI" id="CHEBI:456215"/>
    </ligand>
</feature>
<feature type="binding site" evidence="1">
    <location>
        <begin position="86"/>
        <end position="89"/>
    </location>
    <ligand>
        <name>AMP</name>
        <dbReference type="ChEBI" id="CHEBI:456215"/>
    </ligand>
</feature>
<feature type="binding site" evidence="1">
    <location>
        <position position="93"/>
    </location>
    <ligand>
        <name>AMP</name>
        <dbReference type="ChEBI" id="CHEBI:456215"/>
    </ligand>
</feature>
<feature type="binding site" evidence="1">
    <location>
        <position position="128"/>
    </location>
    <ligand>
        <name>ATP</name>
        <dbReference type="ChEBI" id="CHEBI:30616"/>
    </ligand>
</feature>
<feature type="binding site" evidence="1">
    <location>
        <position position="130"/>
    </location>
    <ligand>
        <name>AMP</name>
        <dbReference type="ChEBI" id="CHEBI:456215"/>
    </ligand>
</feature>
<feature type="binding site" evidence="1">
    <location>
        <position position="141"/>
    </location>
    <ligand>
        <name>AMP</name>
        <dbReference type="ChEBI" id="CHEBI:456215"/>
    </ligand>
</feature>
<feature type="binding site" evidence="1">
    <location>
        <position position="169"/>
    </location>
    <ligand>
        <name>ATP</name>
        <dbReference type="ChEBI" id="CHEBI:30616"/>
    </ligand>
</feature>
<proteinExistence type="inferred from homology"/>